<name>GLNE_PECAS</name>
<keyword id="KW-0067">ATP-binding</keyword>
<keyword id="KW-0460">Magnesium</keyword>
<keyword id="KW-0511">Multifunctional enzyme</keyword>
<keyword id="KW-0547">Nucleotide-binding</keyword>
<keyword id="KW-0548">Nucleotidyltransferase</keyword>
<keyword id="KW-1185">Reference proteome</keyword>
<keyword id="KW-0808">Transferase</keyword>
<proteinExistence type="inferred from homology"/>
<reference key="1">
    <citation type="journal article" date="2004" name="Proc. Natl. Acad. Sci. U.S.A.">
        <title>Genome sequence of the enterobacterial phytopathogen Erwinia carotovora subsp. atroseptica and characterization of virulence factors.</title>
        <authorList>
            <person name="Bell K.S."/>
            <person name="Sebaihia M."/>
            <person name="Pritchard L."/>
            <person name="Holden M.T.G."/>
            <person name="Hyman L.J."/>
            <person name="Holeva M.C."/>
            <person name="Thomson N.R."/>
            <person name="Bentley S.D."/>
            <person name="Churcher L.J.C."/>
            <person name="Mungall K."/>
            <person name="Atkin R."/>
            <person name="Bason N."/>
            <person name="Brooks K."/>
            <person name="Chillingworth T."/>
            <person name="Clark K."/>
            <person name="Doggett J."/>
            <person name="Fraser A."/>
            <person name="Hance Z."/>
            <person name="Hauser H."/>
            <person name="Jagels K."/>
            <person name="Moule S."/>
            <person name="Norbertczak H."/>
            <person name="Ormond D."/>
            <person name="Price C."/>
            <person name="Quail M.A."/>
            <person name="Sanders M."/>
            <person name="Walker D."/>
            <person name="Whitehead S."/>
            <person name="Salmond G.P.C."/>
            <person name="Birch P.R.J."/>
            <person name="Parkhill J."/>
            <person name="Toth I.K."/>
        </authorList>
    </citation>
    <scope>NUCLEOTIDE SEQUENCE [LARGE SCALE GENOMIC DNA]</scope>
    <source>
        <strain>SCRI 1043 / ATCC BAA-672</strain>
    </source>
</reference>
<gene>
    <name evidence="1" type="primary">glnE</name>
    <name type="ordered locus">ECA3585</name>
</gene>
<comment type="function">
    <text evidence="1">Involved in the regulation of glutamine synthetase GlnA, a key enzyme in the process to assimilate ammonia. When cellular nitrogen levels are high, the C-terminal adenylyl transferase (AT) inactivates GlnA by covalent transfer of an adenylyl group from ATP to specific tyrosine residue of GlnA, thus reducing its activity. Conversely, when nitrogen levels are low, the N-terminal adenylyl removase (AR) activates GlnA by removing the adenylyl group by phosphorolysis, increasing its activity. The regulatory region of GlnE binds the signal transduction protein PII (GlnB) which indicates the nitrogen status of the cell.</text>
</comment>
<comment type="catalytic activity">
    <reaction evidence="1">
        <text>[glutamine synthetase]-O(4)-(5'-adenylyl)-L-tyrosine + phosphate = [glutamine synthetase]-L-tyrosine + ADP</text>
        <dbReference type="Rhea" id="RHEA:43716"/>
        <dbReference type="Rhea" id="RHEA-COMP:10660"/>
        <dbReference type="Rhea" id="RHEA-COMP:10661"/>
        <dbReference type="ChEBI" id="CHEBI:43474"/>
        <dbReference type="ChEBI" id="CHEBI:46858"/>
        <dbReference type="ChEBI" id="CHEBI:83624"/>
        <dbReference type="ChEBI" id="CHEBI:456216"/>
        <dbReference type="EC" id="2.7.7.89"/>
    </reaction>
</comment>
<comment type="catalytic activity">
    <reaction evidence="1">
        <text>[glutamine synthetase]-L-tyrosine + ATP = [glutamine synthetase]-O(4)-(5'-adenylyl)-L-tyrosine + diphosphate</text>
        <dbReference type="Rhea" id="RHEA:18589"/>
        <dbReference type="Rhea" id="RHEA-COMP:10660"/>
        <dbReference type="Rhea" id="RHEA-COMP:10661"/>
        <dbReference type="ChEBI" id="CHEBI:30616"/>
        <dbReference type="ChEBI" id="CHEBI:33019"/>
        <dbReference type="ChEBI" id="CHEBI:46858"/>
        <dbReference type="ChEBI" id="CHEBI:83624"/>
        <dbReference type="EC" id="2.7.7.42"/>
    </reaction>
</comment>
<comment type="cofactor">
    <cofactor evidence="1">
        <name>Mg(2+)</name>
        <dbReference type="ChEBI" id="CHEBI:18420"/>
    </cofactor>
</comment>
<comment type="similarity">
    <text evidence="1">Belongs to the GlnE family.</text>
</comment>
<accession>Q6D163</accession>
<feature type="chain" id="PRO_0000209247" description="Bifunctional glutamine synthetase adenylyltransferase/adenylyl-removing enzyme">
    <location>
        <begin position="1"/>
        <end position="951"/>
    </location>
</feature>
<feature type="region of interest" description="Adenylyl removase" evidence="1">
    <location>
        <begin position="1"/>
        <end position="445"/>
    </location>
</feature>
<feature type="region of interest" description="Adenylyl transferase" evidence="1">
    <location>
        <begin position="454"/>
        <end position="951"/>
    </location>
</feature>
<evidence type="ECO:0000255" key="1">
    <source>
        <dbReference type="HAMAP-Rule" id="MF_00802"/>
    </source>
</evidence>
<dbReference type="EC" id="2.7.7.89" evidence="1"/>
<dbReference type="EC" id="2.7.7.42" evidence="1"/>
<dbReference type="EMBL" id="BX950851">
    <property type="protein sequence ID" value="CAG76483.1"/>
    <property type="molecule type" value="Genomic_DNA"/>
</dbReference>
<dbReference type="RefSeq" id="WP_011095088.1">
    <property type="nucleotide sequence ID" value="NC_004547.2"/>
</dbReference>
<dbReference type="SMR" id="Q6D163"/>
<dbReference type="STRING" id="218491.ECA3585"/>
<dbReference type="KEGG" id="eca:ECA3585"/>
<dbReference type="PATRIC" id="fig|218491.5.peg.3636"/>
<dbReference type="eggNOG" id="COG1391">
    <property type="taxonomic scope" value="Bacteria"/>
</dbReference>
<dbReference type="HOGENOM" id="CLU_006233_0_1_6"/>
<dbReference type="OrthoDB" id="9759366at2"/>
<dbReference type="Proteomes" id="UP000007966">
    <property type="component" value="Chromosome"/>
</dbReference>
<dbReference type="GO" id="GO:0005829">
    <property type="term" value="C:cytosol"/>
    <property type="evidence" value="ECO:0007669"/>
    <property type="project" value="TreeGrafter"/>
</dbReference>
<dbReference type="GO" id="GO:0008882">
    <property type="term" value="F:[glutamate-ammonia-ligase] adenylyltransferase activity"/>
    <property type="evidence" value="ECO:0007669"/>
    <property type="project" value="UniProtKB-UniRule"/>
</dbReference>
<dbReference type="GO" id="GO:0047388">
    <property type="term" value="F:[glutamine synthetase]-adenylyl-L-tyrosine phosphorylase activity"/>
    <property type="evidence" value="ECO:0007669"/>
    <property type="project" value="UniProtKB-EC"/>
</dbReference>
<dbReference type="GO" id="GO:0005524">
    <property type="term" value="F:ATP binding"/>
    <property type="evidence" value="ECO:0007669"/>
    <property type="project" value="UniProtKB-UniRule"/>
</dbReference>
<dbReference type="GO" id="GO:0000287">
    <property type="term" value="F:magnesium ion binding"/>
    <property type="evidence" value="ECO:0007669"/>
    <property type="project" value="UniProtKB-UniRule"/>
</dbReference>
<dbReference type="GO" id="GO:0000820">
    <property type="term" value="P:regulation of glutamine family amino acid metabolic process"/>
    <property type="evidence" value="ECO:0007669"/>
    <property type="project" value="UniProtKB-UniRule"/>
</dbReference>
<dbReference type="CDD" id="cd05401">
    <property type="entry name" value="NT_GlnE_GlnD_like"/>
    <property type="match status" value="2"/>
</dbReference>
<dbReference type="FunFam" id="1.20.120.1510:FF:000001">
    <property type="entry name" value="Bifunctional glutamine synthetase adenylyltransferase/adenylyl-removing enzyme"/>
    <property type="match status" value="1"/>
</dbReference>
<dbReference type="FunFam" id="1.20.120.330:FF:000005">
    <property type="entry name" value="Bifunctional glutamine synthetase adenylyltransferase/adenylyl-removing enzyme"/>
    <property type="match status" value="1"/>
</dbReference>
<dbReference type="FunFam" id="1.20.120.330:FF:000008">
    <property type="entry name" value="Bifunctional glutamine synthetase adenylyltransferase/adenylyl-removing enzyme"/>
    <property type="match status" value="1"/>
</dbReference>
<dbReference type="FunFam" id="3.30.460.10:FF:000009">
    <property type="entry name" value="Bifunctional glutamine synthetase adenylyltransferase/adenylyl-removing enzyme"/>
    <property type="match status" value="1"/>
</dbReference>
<dbReference type="FunFam" id="3.30.460.10:FF:000014">
    <property type="entry name" value="Bifunctional glutamine synthetase adenylyltransferase/adenylyl-removing enzyme"/>
    <property type="match status" value="1"/>
</dbReference>
<dbReference type="Gene3D" id="1.20.120.1510">
    <property type="match status" value="1"/>
</dbReference>
<dbReference type="Gene3D" id="3.30.460.10">
    <property type="entry name" value="Beta Polymerase, domain 2"/>
    <property type="match status" value="2"/>
</dbReference>
<dbReference type="Gene3D" id="1.10.4050.10">
    <property type="entry name" value="Glutamine synthase adenylyltransferase GlnE"/>
    <property type="match status" value="1"/>
</dbReference>
<dbReference type="Gene3D" id="1.20.120.330">
    <property type="entry name" value="Nucleotidyltransferases domain 2"/>
    <property type="match status" value="2"/>
</dbReference>
<dbReference type="HAMAP" id="MF_00802">
    <property type="entry name" value="GlnE"/>
    <property type="match status" value="1"/>
</dbReference>
<dbReference type="InterPro" id="IPR023057">
    <property type="entry name" value="GlnE"/>
</dbReference>
<dbReference type="InterPro" id="IPR005190">
    <property type="entry name" value="GlnE_rpt_dom"/>
</dbReference>
<dbReference type="InterPro" id="IPR043519">
    <property type="entry name" value="NT_sf"/>
</dbReference>
<dbReference type="InterPro" id="IPR013546">
    <property type="entry name" value="PII_UdlTrfase/GS_AdlTrfase"/>
</dbReference>
<dbReference type="NCBIfam" id="NF008292">
    <property type="entry name" value="PRK11072.1"/>
    <property type="match status" value="1"/>
</dbReference>
<dbReference type="PANTHER" id="PTHR30621:SF0">
    <property type="entry name" value="BIFUNCTIONAL GLUTAMINE SYNTHETASE ADENYLYLTRANSFERASE_ADENYLYL-REMOVING ENZYME"/>
    <property type="match status" value="1"/>
</dbReference>
<dbReference type="PANTHER" id="PTHR30621">
    <property type="entry name" value="GLUTAMINE SYNTHETASE ADENYLYLTRANSFERASE"/>
    <property type="match status" value="1"/>
</dbReference>
<dbReference type="Pfam" id="PF08335">
    <property type="entry name" value="GlnD_UR_UTase"/>
    <property type="match status" value="2"/>
</dbReference>
<dbReference type="Pfam" id="PF03710">
    <property type="entry name" value="GlnE"/>
    <property type="match status" value="2"/>
</dbReference>
<dbReference type="SUPFAM" id="SSF81301">
    <property type="entry name" value="Nucleotidyltransferase"/>
    <property type="match status" value="2"/>
</dbReference>
<dbReference type="SUPFAM" id="SSF81593">
    <property type="entry name" value="Nucleotidyltransferase substrate binding subunit/domain"/>
    <property type="match status" value="2"/>
</dbReference>
<sequence>MSILPLPALPVLLTEQSQRALSRLREAAPDEPITDSDSAVLALSDFVSDALALHPDWWQGIHQQPPQPEEWQHYADWLSNALVDVNDENALMAALRRFRRHMLARIAWSQALQTSTTEHSLRQLSELAEVIIVAARSWLYQVCCHEWGTPCNAKGVAQPLLILGMGKLGGGELNFSSDIDLIFVYPENGHTQGGRRELDNAQFFTRLGQRLIKVLDQPTVDGFVYRVDMRLRPFGDSGPLVLSFAAMEDYYQEQGRDWERYAMVKARLMGGMDDAYSQELRSTLKPFVFRRYIDFSVIQSLRNMKGMIAREVRRRDLRNNIKLGAGGIREIEFITQVFQLIRGGREPGLQGRSLLPTLQHVGALGLLTPQQVLDLSTSYLFLRRLENLLQAIADEQTQTLPSDELNQQRLAWGMGFDSWDTLQSMLSQHMQAVRHVFDELIGDDAPDNNDIPEHSSYSSLWQDTLDDGDLAPLTPHLTETVREKLMRTIVEFRNDVAKRTIGPRGRDVLDQLMPCLLAEVCARQEADTVLSRLTPLLLGIVTRTTYLELLLESRAALAQLIRLCAASPMVASQLARYPLLLDELLDASTLYQPTAPGAYADELRQYLMRVPEDDEEQQLEAVRQFKQSQQLRIAAGDIGGVLPVMKVSDHLTYLAEAIIAAVVQQAWGLMVERYGQPSHLQHREGRGFAVIAYGKLGGWELGYSSDLDLVFLLDCPSDVMTDGERSIDGRQFYLRLAQRVMHLFSTRTSSGILYEVDARLRPSGAAGMLVSTVEAFDDYQRNEAWTWEHQALVRARMVYGESGVQQTFESIRRSILCAERDADTLRTEVREMREKMRQHLANKDKSRFDIKTDAGGITDIEFITQYLVLRYAAQEPRLTHWSDNVRILELMAQYGVMEESEANALKLAYVTMRNELHHLALQELSGRVSKDRFVAEREQVLVSWNKWLMGA</sequence>
<organism>
    <name type="scientific">Pectobacterium atrosepticum (strain SCRI 1043 / ATCC BAA-672)</name>
    <name type="common">Erwinia carotovora subsp. atroseptica</name>
    <dbReference type="NCBI Taxonomy" id="218491"/>
    <lineage>
        <taxon>Bacteria</taxon>
        <taxon>Pseudomonadati</taxon>
        <taxon>Pseudomonadota</taxon>
        <taxon>Gammaproteobacteria</taxon>
        <taxon>Enterobacterales</taxon>
        <taxon>Pectobacteriaceae</taxon>
        <taxon>Pectobacterium</taxon>
    </lineage>
</organism>
<protein>
    <recommendedName>
        <fullName evidence="1">Bifunctional glutamine synthetase adenylyltransferase/adenylyl-removing enzyme</fullName>
    </recommendedName>
    <alternativeName>
        <fullName evidence="1">ATP:glutamine synthetase adenylyltransferase</fullName>
    </alternativeName>
    <alternativeName>
        <fullName evidence="1">ATase</fullName>
    </alternativeName>
    <domain>
        <recommendedName>
            <fullName evidence="1">Glutamine synthetase adenylyl-L-tyrosine phosphorylase</fullName>
            <ecNumber evidence="1">2.7.7.89</ecNumber>
        </recommendedName>
        <alternativeName>
            <fullName evidence="1">Adenylyl removase</fullName>
            <shortName evidence="1">AR</shortName>
            <shortName evidence="1">AT-N</shortName>
        </alternativeName>
    </domain>
    <domain>
        <recommendedName>
            <fullName evidence="1">Glutamine synthetase adenylyl transferase</fullName>
            <ecNumber evidence="1">2.7.7.42</ecNumber>
        </recommendedName>
        <alternativeName>
            <fullName evidence="1">Adenylyl transferase</fullName>
            <shortName evidence="1">AT</shortName>
            <shortName evidence="1">AT-C</shortName>
        </alternativeName>
    </domain>
</protein>